<name>YPTJ_CAEEL</name>
<comment type="subcellular location">
    <subcellularLocation>
        <location evidence="2">Membrane</location>
        <topology evidence="2">Single-pass membrane protein</topology>
    </subcellularLocation>
</comment>
<comment type="similarity">
    <text evidence="2">Belongs to the glycosyltransferase 92 family.</text>
</comment>
<accession>Q23469</accession>
<proteinExistence type="inferred from homology"/>
<feature type="chain" id="PRO_0000065516" description="Glycosyltransferase family 92 protein ZK381.2">
    <location>
        <begin position="1"/>
        <end position="503"/>
    </location>
</feature>
<feature type="transmembrane region" description="Helical" evidence="1">
    <location>
        <begin position="7"/>
        <end position="27"/>
    </location>
</feature>
<feature type="domain" description="GT92">
    <location>
        <begin position="156"/>
        <end position="441"/>
    </location>
</feature>
<gene>
    <name type="ORF">ZK381.2</name>
</gene>
<organism>
    <name type="scientific">Caenorhabditis elegans</name>
    <dbReference type="NCBI Taxonomy" id="6239"/>
    <lineage>
        <taxon>Eukaryota</taxon>
        <taxon>Metazoa</taxon>
        <taxon>Ecdysozoa</taxon>
        <taxon>Nematoda</taxon>
        <taxon>Chromadorea</taxon>
        <taxon>Rhabditida</taxon>
        <taxon>Rhabditina</taxon>
        <taxon>Rhabditomorpha</taxon>
        <taxon>Rhabditoidea</taxon>
        <taxon>Rhabditidae</taxon>
        <taxon>Peloderinae</taxon>
        <taxon>Caenorhabditis</taxon>
    </lineage>
</organism>
<reference key="1">
    <citation type="journal article" date="1998" name="Science">
        <title>Genome sequence of the nematode C. elegans: a platform for investigating biology.</title>
        <authorList>
            <consortium name="The C. elegans sequencing consortium"/>
        </authorList>
    </citation>
    <scope>NUCLEOTIDE SEQUENCE [LARGE SCALE GENOMIC DNA]</scope>
    <source>
        <strain>Bristol N2</strain>
    </source>
</reference>
<keyword id="KW-0328">Glycosyltransferase</keyword>
<keyword id="KW-0472">Membrane</keyword>
<keyword id="KW-1185">Reference proteome</keyword>
<keyword id="KW-0808">Transferase</keyword>
<keyword id="KW-0812">Transmembrane</keyword>
<keyword id="KW-1133">Transmembrane helix</keyword>
<evidence type="ECO:0000255" key="1"/>
<evidence type="ECO:0000305" key="2"/>
<sequence length="503" mass="58333">MRWFINYKPCLLIILIFNSVILLFILIRKSSQPFSNILTDPSGTSREKLPVSHAFINSVYYYPTSKSLGENALAFTMAIDQHSYSMKNHTFTVLGYNSTDSVESIATSQTEGISRCRYVTMMARTNTVENLEKLKIESQGVSVEVPFRIARYSAPKPVIICISPQFAAEQWQMFVMHVHAANRFGGHLHIYLTSIIESYFQLMQEYERQGYITLDYWLRMKFSNTKTPYYEPNENVEWRHQAGAQTDCLLQYKEAAEYIAFFDMDDILFPKNYPTYLEEFNSVLAANPGKNYLFYGRREHEFVKASTLTEFSFTELVQSLRSSQTVKRGKVVVRPEAYNSTWIHNSKHVSFETSVQVKSPTLVHVQLPVDKNGKRNDSRDLWKIKFGPLNETIREDDIRAIEDDINRIKNLAVISSIGPFLPSSDFYLPIVFKCYFDSFYKDTFVTKIGVRRCPNADICDLPQREDYKCIHSDAQYYSGPDMQPVTYHFTTDSFWSKDIGCYQ</sequence>
<protein>
    <recommendedName>
        <fullName>Glycosyltransferase family 92 protein ZK381.2</fullName>
        <ecNumber evidence="2">2.4.1.-</ecNumber>
    </recommendedName>
</protein>
<dbReference type="EC" id="2.4.1.-" evidence="2"/>
<dbReference type="EMBL" id="FO080210">
    <property type="protein sequence ID" value="CCD62008.1"/>
    <property type="molecule type" value="Genomic_DNA"/>
</dbReference>
<dbReference type="PIR" id="T29175">
    <property type="entry name" value="T29175"/>
</dbReference>
<dbReference type="RefSeq" id="NP_501075.1">
    <property type="nucleotide sequence ID" value="NM_068674.3"/>
</dbReference>
<dbReference type="FunCoup" id="Q23469">
    <property type="interactions" value="14"/>
</dbReference>
<dbReference type="PaxDb" id="6239-ZK381.2"/>
<dbReference type="EnsemblMetazoa" id="ZK381.2.1">
    <property type="protein sequence ID" value="ZK381.2.1"/>
    <property type="gene ID" value="WBGene00022725"/>
</dbReference>
<dbReference type="EnsemblMetazoa" id="ZK381.2.2">
    <property type="protein sequence ID" value="ZK381.2.2"/>
    <property type="gene ID" value="WBGene00022725"/>
</dbReference>
<dbReference type="GeneID" id="191306"/>
<dbReference type="KEGG" id="cel:CELE_ZK381.2"/>
<dbReference type="UCSC" id="ZK381.2">
    <property type="organism name" value="c. elegans"/>
</dbReference>
<dbReference type="AGR" id="WB:WBGene00022725"/>
<dbReference type="CTD" id="191306"/>
<dbReference type="WormBase" id="ZK381.2">
    <property type="protein sequence ID" value="CE07626"/>
    <property type="gene ID" value="WBGene00022725"/>
</dbReference>
<dbReference type="eggNOG" id="KOG4735">
    <property type="taxonomic scope" value="Eukaryota"/>
</dbReference>
<dbReference type="GeneTree" id="ENSGT00970000195836"/>
<dbReference type="HOGENOM" id="CLU_028496_1_0_1"/>
<dbReference type="InParanoid" id="Q23469"/>
<dbReference type="OMA" id="KCYFDSF"/>
<dbReference type="OrthoDB" id="5809216at2759"/>
<dbReference type="PhylomeDB" id="Q23469"/>
<dbReference type="PRO" id="PR:Q23469"/>
<dbReference type="Proteomes" id="UP000001940">
    <property type="component" value="Chromosome IV"/>
</dbReference>
<dbReference type="Bgee" id="WBGene00022725">
    <property type="expression patterns" value="Expressed in embryo and 1 other cell type or tissue"/>
</dbReference>
<dbReference type="GO" id="GO:0016020">
    <property type="term" value="C:membrane"/>
    <property type="evidence" value="ECO:0007669"/>
    <property type="project" value="UniProtKB-SubCell"/>
</dbReference>
<dbReference type="GO" id="GO:0016757">
    <property type="term" value="F:glycosyltransferase activity"/>
    <property type="evidence" value="ECO:0007669"/>
    <property type="project" value="UniProtKB-KW"/>
</dbReference>
<dbReference type="InterPro" id="IPR008166">
    <property type="entry name" value="Glyco_transf_92"/>
</dbReference>
<dbReference type="InterPro" id="IPR052012">
    <property type="entry name" value="GTase_92"/>
</dbReference>
<dbReference type="PANTHER" id="PTHR21645">
    <property type="entry name" value="GLYCOSYLTRANSFERASE FAMILY 92 PROTEIN"/>
    <property type="match status" value="1"/>
</dbReference>
<dbReference type="PANTHER" id="PTHR21645:SF14">
    <property type="entry name" value="GLYCOSYLTRANSFERASE FAMILY 92 PROTEIN-RELATED"/>
    <property type="match status" value="1"/>
</dbReference>
<dbReference type="Pfam" id="PF01697">
    <property type="entry name" value="Glyco_transf_92"/>
    <property type="match status" value="1"/>
</dbReference>